<comment type="function">
    <text evidence="1 2">Catalytic component of the signal peptidase complex (SPC) which catalyzes the cleavage of N-terminal signal sequences from nascent proteins as they are translocated into the lumen of the endoplasmic reticulum (By similarity). Specifically cleaves N-terminal signal peptides that contain a hydrophobic alpha-helix (h-region) shorter than 18-20 amino acids (By similarity).</text>
</comment>
<comment type="catalytic activity">
    <reaction evidence="1">
        <text>Cleavage of hydrophobic, N-terminal signal or leader sequences from secreted and periplasmic proteins.</text>
        <dbReference type="EC" id="3.4.21.89"/>
    </reaction>
</comment>
<comment type="subunit">
    <text evidence="1 2">Component of the signal peptidase complex (SPC) composed of a catalytic subunit SEC11 and three accessory subunits SPC1, SPC2 and SPC3 (By similarity). The complex induces a local thinning of the ER membrane which is used to measure the length of the signal peptide (SP) h-region of protein substrates. This ensures the selectivity of the complex towards h-regions shorter than 18-20 amino acids (By similarity). SPC associates with the translocon complex (By similarity).</text>
</comment>
<comment type="subcellular location">
    <subcellularLocation>
        <location evidence="1">Endoplasmic reticulum membrane</location>
        <topology evidence="1">Single-pass type II membrane protein</topology>
    </subcellularLocation>
</comment>
<comment type="domain">
    <text evidence="2">The C-terminal short (CTS) helix is essential for catalytic activity. It may be accommodated as a transmembrane helix in the thinned membrane environment of the complex, similarly to the signal peptide in the complex substrates.</text>
</comment>
<comment type="similarity">
    <text evidence="4">Belongs to the peptidase S26B family.</text>
</comment>
<proteinExistence type="inferred from homology"/>
<sequence length="172" mass="19140">MLSGLQNPRQAAAQLMNFALILSTAFMMWKGLSVATDSPSPIVVVLSGSMEPAFQRGDLLLLWNRNMWQETAVGEIVVYNVKGKDIPIVHRVVRKFGTGDKAKLLTKGDNNNADDTDLYARGQDYLERKDIIGSVVAYFPFVGYVTILLSEHPWLKTVMLGIMGLLVVIQRE</sequence>
<accession>E9E796</accession>
<keyword id="KW-0256">Endoplasmic reticulum</keyword>
<keyword id="KW-0378">Hydrolase</keyword>
<keyword id="KW-0472">Membrane</keyword>
<keyword id="KW-0645">Protease</keyword>
<keyword id="KW-1185">Reference proteome</keyword>
<keyword id="KW-0735">Signal-anchor</keyword>
<keyword id="KW-0812">Transmembrane</keyword>
<keyword id="KW-1133">Transmembrane helix</keyword>
<protein>
    <recommendedName>
        <fullName>Signal peptidase complex catalytic subunit SEC11</fullName>
        <ecNumber evidence="1">3.4.21.89</ecNumber>
    </recommendedName>
    <alternativeName>
        <fullName>Signal peptidase I</fullName>
    </alternativeName>
</protein>
<feature type="chain" id="PRO_0000412337" description="Signal peptidase complex catalytic subunit SEC11">
    <location>
        <begin position="1"/>
        <end position="172"/>
    </location>
</feature>
<feature type="topological domain" description="Cytoplasmic" evidence="4">
    <location>
        <begin position="1"/>
        <end position="14"/>
    </location>
</feature>
<feature type="transmembrane region" description="Helical; Signal-anchor for type II membrane protein" evidence="3">
    <location>
        <begin position="15"/>
        <end position="35"/>
    </location>
</feature>
<feature type="topological domain" description="Lumenal" evidence="4">
    <location>
        <begin position="36"/>
        <end position="172"/>
    </location>
</feature>
<feature type="region of interest" description="C-terminal short (CTS) helix" evidence="2">
    <location>
        <begin position="158"/>
        <end position="169"/>
    </location>
</feature>
<feature type="active site" description="Charge relay system" evidence="1">
    <location>
        <position position="49"/>
    </location>
</feature>
<feature type="active site" description="Charge relay system" evidence="1">
    <location>
        <position position="90"/>
    </location>
</feature>
<feature type="active site" description="Charge relay system" evidence="1">
    <location>
        <position position="115"/>
    </location>
</feature>
<dbReference type="EC" id="3.4.21.89" evidence="1"/>
<dbReference type="EMBL" id="GL698514">
    <property type="protein sequence ID" value="EFY88271.1"/>
    <property type="molecule type" value="Genomic_DNA"/>
</dbReference>
<dbReference type="RefSeq" id="XP_007812084.1">
    <property type="nucleotide sequence ID" value="XM_007813893.1"/>
</dbReference>
<dbReference type="SMR" id="E9E796"/>
<dbReference type="FunCoup" id="E9E796">
    <property type="interactions" value="642"/>
</dbReference>
<dbReference type="STRING" id="655827.E9E796"/>
<dbReference type="GeneID" id="19250055"/>
<dbReference type="KEGG" id="maw:19250055"/>
<dbReference type="eggNOG" id="KOG3342">
    <property type="taxonomic scope" value="Eukaryota"/>
</dbReference>
<dbReference type="HOGENOM" id="CLU_089996_0_0_1"/>
<dbReference type="InParanoid" id="E9E796"/>
<dbReference type="OMA" id="ILMNEYP"/>
<dbReference type="OrthoDB" id="10257561at2759"/>
<dbReference type="Proteomes" id="UP000002499">
    <property type="component" value="Unassembled WGS sequence"/>
</dbReference>
<dbReference type="GO" id="GO:0005787">
    <property type="term" value="C:signal peptidase complex"/>
    <property type="evidence" value="ECO:0007669"/>
    <property type="project" value="EnsemblFungi"/>
</dbReference>
<dbReference type="GO" id="GO:0004252">
    <property type="term" value="F:serine-type endopeptidase activity"/>
    <property type="evidence" value="ECO:0007669"/>
    <property type="project" value="UniProtKB-EC"/>
</dbReference>
<dbReference type="GO" id="GO:0045047">
    <property type="term" value="P:protein targeting to ER"/>
    <property type="evidence" value="ECO:0007669"/>
    <property type="project" value="EnsemblFungi"/>
</dbReference>
<dbReference type="GO" id="GO:0006465">
    <property type="term" value="P:signal peptide processing"/>
    <property type="evidence" value="ECO:0007669"/>
    <property type="project" value="EnsemblFungi"/>
</dbReference>
<dbReference type="CDD" id="cd06530">
    <property type="entry name" value="S26_SPase_I"/>
    <property type="match status" value="1"/>
</dbReference>
<dbReference type="FunFam" id="2.10.109.10:FF:000003">
    <property type="entry name" value="Signal peptidase complex catalytic subunit SEC11"/>
    <property type="match status" value="1"/>
</dbReference>
<dbReference type="Gene3D" id="2.10.109.10">
    <property type="entry name" value="Umud Fragment, subunit A"/>
    <property type="match status" value="1"/>
</dbReference>
<dbReference type="InterPro" id="IPR036286">
    <property type="entry name" value="LexA/Signal_pep-like_sf"/>
</dbReference>
<dbReference type="InterPro" id="IPR019756">
    <property type="entry name" value="Pept_S26A_signal_pept_1_Ser-AS"/>
</dbReference>
<dbReference type="InterPro" id="IPR015927">
    <property type="entry name" value="Peptidase_S24_S26A/B/C"/>
</dbReference>
<dbReference type="InterPro" id="IPR019533">
    <property type="entry name" value="Peptidase_S26"/>
</dbReference>
<dbReference type="InterPro" id="IPR001733">
    <property type="entry name" value="Peptidase_S26B"/>
</dbReference>
<dbReference type="NCBIfam" id="TIGR02228">
    <property type="entry name" value="sigpep_I_arch"/>
    <property type="match status" value="1"/>
</dbReference>
<dbReference type="PANTHER" id="PTHR10806">
    <property type="entry name" value="SIGNAL PEPTIDASE COMPLEX CATALYTIC SUBUNIT SEC11"/>
    <property type="match status" value="1"/>
</dbReference>
<dbReference type="PANTHER" id="PTHR10806:SF6">
    <property type="entry name" value="SIGNAL PEPTIDASE COMPLEX CATALYTIC SUBUNIT SEC11"/>
    <property type="match status" value="1"/>
</dbReference>
<dbReference type="Pfam" id="PF00717">
    <property type="entry name" value="Peptidase_S24"/>
    <property type="match status" value="1"/>
</dbReference>
<dbReference type="PRINTS" id="PR00728">
    <property type="entry name" value="SIGNALPTASE"/>
</dbReference>
<dbReference type="SUPFAM" id="SSF51306">
    <property type="entry name" value="LexA/Signal peptidase"/>
    <property type="match status" value="1"/>
</dbReference>
<dbReference type="PROSITE" id="PS00501">
    <property type="entry name" value="SPASE_I_1"/>
    <property type="match status" value="1"/>
</dbReference>
<name>SEC11_METAQ</name>
<organism>
    <name type="scientific">Metarhizium acridum (strain CQMa 102)</name>
    <dbReference type="NCBI Taxonomy" id="655827"/>
    <lineage>
        <taxon>Eukaryota</taxon>
        <taxon>Fungi</taxon>
        <taxon>Dikarya</taxon>
        <taxon>Ascomycota</taxon>
        <taxon>Pezizomycotina</taxon>
        <taxon>Sordariomycetes</taxon>
        <taxon>Hypocreomycetidae</taxon>
        <taxon>Hypocreales</taxon>
        <taxon>Clavicipitaceae</taxon>
        <taxon>Metarhizium</taxon>
    </lineage>
</organism>
<evidence type="ECO:0000250" key="1">
    <source>
        <dbReference type="UniProtKB" id="P15367"/>
    </source>
</evidence>
<evidence type="ECO:0000250" key="2">
    <source>
        <dbReference type="UniProtKB" id="P67812"/>
    </source>
</evidence>
<evidence type="ECO:0000255" key="3"/>
<evidence type="ECO:0000305" key="4"/>
<gene>
    <name type="primary">SEC11</name>
    <name type="ORF">MAC_05744</name>
</gene>
<reference key="1">
    <citation type="journal article" date="2011" name="PLoS Genet.">
        <title>Genome sequencing and comparative transcriptomics of the model entomopathogenic fungi Metarhizium anisopliae and M. acridum.</title>
        <authorList>
            <person name="Gao Q."/>
            <person name="Jin K."/>
            <person name="Ying S.-H."/>
            <person name="Zhang Y."/>
            <person name="Xiao G."/>
            <person name="Shang Y."/>
            <person name="Duan Z."/>
            <person name="Hu X."/>
            <person name="Xie X.-Q."/>
            <person name="Zhou G."/>
            <person name="Peng G."/>
            <person name="Luo Z."/>
            <person name="Huang W."/>
            <person name="Wang B."/>
            <person name="Fang W."/>
            <person name="Wang S."/>
            <person name="Zhong Y."/>
            <person name="Ma L.-J."/>
            <person name="St Leger R.J."/>
            <person name="Zhao G.-P."/>
            <person name="Pei Y."/>
            <person name="Feng M.-G."/>
            <person name="Xia Y."/>
            <person name="Wang C."/>
        </authorList>
    </citation>
    <scope>NUCLEOTIDE SEQUENCE [LARGE SCALE GENOMIC DNA]</scope>
    <source>
        <strain>CQMa 102</strain>
    </source>
</reference>